<reference key="1">
    <citation type="journal article" date="1998" name="Nature">
        <title>The genome sequence of Rickettsia prowazekii and the origin of mitochondria.</title>
        <authorList>
            <person name="Andersson S.G.E."/>
            <person name="Zomorodipour A."/>
            <person name="Andersson J.O."/>
            <person name="Sicheritz-Ponten T."/>
            <person name="Alsmark U.C.M."/>
            <person name="Podowski R.M."/>
            <person name="Naeslund A.K."/>
            <person name="Eriksson A.-S."/>
            <person name="Winkler H.H."/>
            <person name="Kurland C.G."/>
        </authorList>
    </citation>
    <scope>NUCLEOTIDE SEQUENCE [LARGE SCALE GENOMIC DNA]</scope>
    <source>
        <strain>Madrid E</strain>
    </source>
</reference>
<comment type="function">
    <text evidence="1">Probable biotin transporter.</text>
</comment>
<comment type="subcellular location">
    <subcellularLocation>
        <location evidence="3">Cell membrane</location>
        <topology evidence="3">Multi-pass membrane protein</topology>
    </subcellularLocation>
</comment>
<comment type="similarity">
    <text evidence="3">Belongs to the BioY family.</text>
</comment>
<accession>Q9ZDK4</accession>
<name>BIOY_RICPR</name>
<proteinExistence type="inferred from homology"/>
<sequence length="194" mass="21740">MRYIMNSLFKILYLNRFVEYLSTNTYILDIVKIVMGVIAIFASSQITIPIKPVAITMHSVILCIIAFTYSPRLSFLTILTFIFIGVMGLPVFCQFSSGINYFLGSAGGYYLGFLIGMPVMSVLKGKLAENYLNVTIICIIGHAIFYLCGIIWLASMIGLKQAIYSGFIIFIPSGLVKILIFSCLFSYIKNLKRK</sequence>
<feature type="chain" id="PRO_0000144146" description="Probable biotin transporter BioY">
    <location>
        <begin position="1"/>
        <end position="194"/>
    </location>
</feature>
<feature type="transmembrane region" description="Helical" evidence="2">
    <location>
        <begin position="30"/>
        <end position="50"/>
    </location>
</feature>
<feature type="transmembrane region" description="Helical" evidence="2">
    <location>
        <begin position="51"/>
        <end position="71"/>
    </location>
</feature>
<feature type="transmembrane region" description="Helical" evidence="2">
    <location>
        <begin position="73"/>
        <end position="93"/>
    </location>
</feature>
<feature type="transmembrane region" description="Helical" evidence="2">
    <location>
        <begin position="102"/>
        <end position="122"/>
    </location>
</feature>
<feature type="transmembrane region" description="Helical" evidence="2">
    <location>
        <begin position="134"/>
        <end position="154"/>
    </location>
</feature>
<feature type="transmembrane region" description="Helical" evidence="2">
    <location>
        <begin position="165"/>
        <end position="185"/>
    </location>
</feature>
<keyword id="KW-1003">Cell membrane</keyword>
<keyword id="KW-0472">Membrane</keyword>
<keyword id="KW-1185">Reference proteome</keyword>
<keyword id="KW-0812">Transmembrane</keyword>
<keyword id="KW-1133">Transmembrane helix</keyword>
<keyword id="KW-0813">Transport</keyword>
<evidence type="ECO:0000250" key="1"/>
<evidence type="ECO:0000255" key="2"/>
<evidence type="ECO:0000305" key="3"/>
<protein>
    <recommendedName>
        <fullName>Probable biotin transporter BioY</fullName>
    </recommendedName>
</protein>
<gene>
    <name type="primary">bioY</name>
    <name type="ordered locus">RP324</name>
</gene>
<dbReference type="EMBL" id="AJ235271">
    <property type="protein sequence ID" value="CAA14784.1"/>
    <property type="molecule type" value="Genomic_DNA"/>
</dbReference>
<dbReference type="PIR" id="F71688">
    <property type="entry name" value="F71688"/>
</dbReference>
<dbReference type="RefSeq" id="NP_220707.1">
    <property type="nucleotide sequence ID" value="NC_000963.1"/>
</dbReference>
<dbReference type="RefSeq" id="WP_010886266.1">
    <property type="nucleotide sequence ID" value="NC_000963.1"/>
</dbReference>
<dbReference type="SMR" id="Q9ZDK4"/>
<dbReference type="STRING" id="272947.gene:17555404"/>
<dbReference type="EnsemblBacteria" id="CAA14784">
    <property type="protein sequence ID" value="CAA14784"/>
    <property type="gene ID" value="CAA14784"/>
</dbReference>
<dbReference type="KEGG" id="rpr:RP324"/>
<dbReference type="PATRIC" id="fig|272947.5.peg.333"/>
<dbReference type="eggNOG" id="COG1268">
    <property type="taxonomic scope" value="Bacteria"/>
</dbReference>
<dbReference type="HOGENOM" id="CLU_077931_2_2_5"/>
<dbReference type="OrthoDB" id="9803495at2"/>
<dbReference type="Proteomes" id="UP000002480">
    <property type="component" value="Chromosome"/>
</dbReference>
<dbReference type="GO" id="GO:0005886">
    <property type="term" value="C:plasma membrane"/>
    <property type="evidence" value="ECO:0007669"/>
    <property type="project" value="UniProtKB-SubCell"/>
</dbReference>
<dbReference type="GO" id="GO:0015225">
    <property type="term" value="F:biotin transmembrane transporter activity"/>
    <property type="evidence" value="ECO:0007669"/>
    <property type="project" value="InterPro"/>
</dbReference>
<dbReference type="Gene3D" id="1.10.1760.20">
    <property type="match status" value="1"/>
</dbReference>
<dbReference type="InterPro" id="IPR003784">
    <property type="entry name" value="BioY"/>
</dbReference>
<dbReference type="PANTHER" id="PTHR34295">
    <property type="entry name" value="BIOTIN TRANSPORTER BIOY"/>
    <property type="match status" value="1"/>
</dbReference>
<dbReference type="PANTHER" id="PTHR34295:SF1">
    <property type="entry name" value="BIOTIN TRANSPORTER BIOY"/>
    <property type="match status" value="1"/>
</dbReference>
<dbReference type="Pfam" id="PF02632">
    <property type="entry name" value="BioY"/>
    <property type="match status" value="1"/>
</dbReference>
<dbReference type="PIRSF" id="PIRSF016661">
    <property type="entry name" value="BioY"/>
    <property type="match status" value="1"/>
</dbReference>
<organism>
    <name type="scientific">Rickettsia prowazekii (strain Madrid E)</name>
    <dbReference type="NCBI Taxonomy" id="272947"/>
    <lineage>
        <taxon>Bacteria</taxon>
        <taxon>Pseudomonadati</taxon>
        <taxon>Pseudomonadota</taxon>
        <taxon>Alphaproteobacteria</taxon>
        <taxon>Rickettsiales</taxon>
        <taxon>Rickettsiaceae</taxon>
        <taxon>Rickettsieae</taxon>
        <taxon>Rickettsia</taxon>
        <taxon>typhus group</taxon>
    </lineage>
</organism>